<comment type="function">
    <text evidence="1">This protein specifically catalyzes the removal of signal peptides from prolipoproteins.</text>
</comment>
<comment type="catalytic activity">
    <reaction evidence="1">
        <text>Release of signal peptides from bacterial membrane prolipoproteins. Hydrolyzes -Xaa-Yaa-Zaa-|-(S,diacylglyceryl)Cys-, in which Xaa is hydrophobic (preferably Leu), and Yaa (Ala or Ser) and Zaa (Gly or Ala) have small, neutral side chains.</text>
        <dbReference type="EC" id="3.4.23.36"/>
    </reaction>
</comment>
<comment type="pathway">
    <text evidence="1">Protein modification; lipoprotein biosynthesis (signal peptide cleavage).</text>
</comment>
<comment type="subcellular location">
    <subcellularLocation>
        <location evidence="1">Cell inner membrane</location>
        <topology evidence="1">Multi-pass membrane protein</topology>
    </subcellularLocation>
</comment>
<comment type="similarity">
    <text evidence="1">Belongs to the peptidase A8 family.</text>
</comment>
<evidence type="ECO:0000255" key="1">
    <source>
        <dbReference type="HAMAP-Rule" id="MF_00161"/>
    </source>
</evidence>
<keyword id="KW-0064">Aspartyl protease</keyword>
<keyword id="KW-0997">Cell inner membrane</keyword>
<keyword id="KW-1003">Cell membrane</keyword>
<keyword id="KW-0378">Hydrolase</keyword>
<keyword id="KW-0472">Membrane</keyword>
<keyword id="KW-0645">Protease</keyword>
<keyword id="KW-0812">Transmembrane</keyword>
<keyword id="KW-1133">Transmembrane helix</keyword>
<feature type="chain" id="PRO_0000289414" description="Lipoprotein signal peptidase">
    <location>
        <begin position="1"/>
        <end position="168"/>
    </location>
</feature>
<feature type="transmembrane region" description="Helical" evidence="1">
    <location>
        <begin position="5"/>
        <end position="25"/>
    </location>
</feature>
<feature type="transmembrane region" description="Helical" evidence="1">
    <location>
        <begin position="37"/>
        <end position="57"/>
    </location>
</feature>
<feature type="transmembrane region" description="Helical" evidence="1">
    <location>
        <begin position="59"/>
        <end position="79"/>
    </location>
</feature>
<feature type="transmembrane region" description="Helical" evidence="1">
    <location>
        <begin position="85"/>
        <end position="105"/>
    </location>
</feature>
<feature type="transmembrane region" description="Helical" evidence="1">
    <location>
        <begin position="125"/>
        <end position="145"/>
    </location>
</feature>
<feature type="active site" evidence="1">
    <location>
        <position position="115"/>
    </location>
</feature>
<feature type="active site" evidence="1">
    <location>
        <position position="133"/>
    </location>
</feature>
<dbReference type="EC" id="3.4.23.36" evidence="1"/>
<dbReference type="EMBL" id="BA000012">
    <property type="protein sequence ID" value="BAB50155.1"/>
    <property type="molecule type" value="Genomic_DNA"/>
</dbReference>
<dbReference type="RefSeq" id="WP_010911501.1">
    <property type="nucleotide sequence ID" value="NC_002678.2"/>
</dbReference>
<dbReference type="SMR" id="Q98GR1"/>
<dbReference type="KEGG" id="mlo:mlr3211"/>
<dbReference type="PATRIC" id="fig|266835.9.peg.2560"/>
<dbReference type="eggNOG" id="COG0597">
    <property type="taxonomic scope" value="Bacteria"/>
</dbReference>
<dbReference type="HOGENOM" id="CLU_083252_4_3_5"/>
<dbReference type="UniPathway" id="UPA00665"/>
<dbReference type="Proteomes" id="UP000000552">
    <property type="component" value="Chromosome"/>
</dbReference>
<dbReference type="GO" id="GO:0005886">
    <property type="term" value="C:plasma membrane"/>
    <property type="evidence" value="ECO:0007669"/>
    <property type="project" value="UniProtKB-SubCell"/>
</dbReference>
<dbReference type="GO" id="GO:0004190">
    <property type="term" value="F:aspartic-type endopeptidase activity"/>
    <property type="evidence" value="ECO:0007669"/>
    <property type="project" value="UniProtKB-UniRule"/>
</dbReference>
<dbReference type="GO" id="GO:0006508">
    <property type="term" value="P:proteolysis"/>
    <property type="evidence" value="ECO:0007669"/>
    <property type="project" value="UniProtKB-KW"/>
</dbReference>
<dbReference type="HAMAP" id="MF_00161">
    <property type="entry name" value="LspA"/>
    <property type="match status" value="1"/>
</dbReference>
<dbReference type="InterPro" id="IPR001872">
    <property type="entry name" value="Peptidase_A8"/>
</dbReference>
<dbReference type="NCBIfam" id="TIGR00077">
    <property type="entry name" value="lspA"/>
    <property type="match status" value="1"/>
</dbReference>
<dbReference type="PANTHER" id="PTHR33695">
    <property type="entry name" value="LIPOPROTEIN SIGNAL PEPTIDASE"/>
    <property type="match status" value="1"/>
</dbReference>
<dbReference type="PANTHER" id="PTHR33695:SF1">
    <property type="entry name" value="LIPOPROTEIN SIGNAL PEPTIDASE"/>
    <property type="match status" value="1"/>
</dbReference>
<dbReference type="Pfam" id="PF01252">
    <property type="entry name" value="Peptidase_A8"/>
    <property type="match status" value="1"/>
</dbReference>
<dbReference type="PRINTS" id="PR00781">
    <property type="entry name" value="LIPOSIGPTASE"/>
</dbReference>
<dbReference type="PROSITE" id="PS00855">
    <property type="entry name" value="SPASE_II"/>
    <property type="match status" value="1"/>
</dbReference>
<organism>
    <name type="scientific">Mesorhizobium japonicum (strain LMG 29417 / CECT 9101 / MAFF 303099)</name>
    <name type="common">Mesorhizobium loti (strain MAFF 303099)</name>
    <dbReference type="NCBI Taxonomy" id="266835"/>
    <lineage>
        <taxon>Bacteria</taxon>
        <taxon>Pseudomonadati</taxon>
        <taxon>Pseudomonadota</taxon>
        <taxon>Alphaproteobacteria</taxon>
        <taxon>Hyphomicrobiales</taxon>
        <taxon>Phyllobacteriaceae</taxon>
        <taxon>Mesorhizobium</taxon>
    </lineage>
</organism>
<accession>Q98GR1</accession>
<protein>
    <recommendedName>
        <fullName evidence="1">Lipoprotein signal peptidase</fullName>
        <ecNumber evidence="1">3.4.23.36</ecNumber>
    </recommendedName>
    <alternativeName>
        <fullName evidence="1">Prolipoprotein signal peptidase</fullName>
    </alternativeName>
    <alternativeName>
        <fullName evidence="1">Signal peptidase II</fullName>
        <shortName evidence="1">SPase II</shortName>
    </alternativeName>
</protein>
<name>LSPA_RHILO</name>
<sequence length="168" mass="18385">MRSWSPYALLVVAAIALDQWIKHLVETGLPFQEKLDLVPFLALFRTYNTGIAFSMFSSFGDTGLVVIAVLVVAFVLYLATRTPSGHVIARTGFALIIGGALGNLIDRAVYGHVIDYILFHTPVWSFAIFNLADAFISVGAALVVFDELIGWRREPSNAKPSKAKPSKD</sequence>
<gene>
    <name evidence="1" type="primary">lspA</name>
    <name type="ordered locus">mlr3211</name>
</gene>
<reference key="1">
    <citation type="journal article" date="2000" name="DNA Res.">
        <title>Complete genome structure of the nitrogen-fixing symbiotic bacterium Mesorhizobium loti.</title>
        <authorList>
            <person name="Kaneko T."/>
            <person name="Nakamura Y."/>
            <person name="Sato S."/>
            <person name="Asamizu E."/>
            <person name="Kato T."/>
            <person name="Sasamoto S."/>
            <person name="Watanabe A."/>
            <person name="Idesawa K."/>
            <person name="Ishikawa A."/>
            <person name="Kawashima K."/>
            <person name="Kimura T."/>
            <person name="Kishida Y."/>
            <person name="Kiyokawa C."/>
            <person name="Kohara M."/>
            <person name="Matsumoto M."/>
            <person name="Matsuno A."/>
            <person name="Mochizuki Y."/>
            <person name="Nakayama S."/>
            <person name="Nakazaki N."/>
            <person name="Shimpo S."/>
            <person name="Sugimoto M."/>
            <person name="Takeuchi C."/>
            <person name="Yamada M."/>
            <person name="Tabata S."/>
        </authorList>
    </citation>
    <scope>NUCLEOTIDE SEQUENCE [LARGE SCALE GENOMIC DNA]</scope>
    <source>
        <strain>LMG 29417 / CECT 9101 / MAFF 303099</strain>
    </source>
</reference>
<proteinExistence type="inferred from homology"/>